<feature type="chain" id="PRO_0000145515" description="Glyceraldehyde-3-phosphate dehydrogenase">
    <location>
        <begin position="1"/>
        <end position="336"/>
    </location>
</feature>
<feature type="active site" description="Nucleophile" evidence="2">
    <location>
        <position position="151"/>
    </location>
</feature>
<feature type="binding site" evidence="1">
    <location>
        <begin position="12"/>
        <end position="13"/>
    </location>
    <ligand>
        <name>NAD(+)</name>
        <dbReference type="ChEBI" id="CHEBI:57540"/>
    </ligand>
</feature>
<feature type="binding site" evidence="1">
    <location>
        <position position="34"/>
    </location>
    <ligand>
        <name>NAD(+)</name>
        <dbReference type="ChEBI" id="CHEBI:57540"/>
    </ligand>
</feature>
<feature type="binding site" evidence="1">
    <location>
        <position position="79"/>
    </location>
    <ligand>
        <name>NAD(+)</name>
        <dbReference type="ChEBI" id="CHEBI:57540"/>
    </ligand>
</feature>
<feature type="binding site" evidence="1">
    <location>
        <begin position="150"/>
        <end position="152"/>
    </location>
    <ligand>
        <name>D-glyceraldehyde 3-phosphate</name>
        <dbReference type="ChEBI" id="CHEBI:59776"/>
    </ligand>
</feature>
<feature type="binding site" evidence="1">
    <location>
        <position position="181"/>
    </location>
    <ligand>
        <name>D-glyceraldehyde 3-phosphate</name>
        <dbReference type="ChEBI" id="CHEBI:59776"/>
    </ligand>
</feature>
<feature type="binding site" evidence="1">
    <location>
        <begin position="210"/>
        <end position="211"/>
    </location>
    <ligand>
        <name>D-glyceraldehyde 3-phosphate</name>
        <dbReference type="ChEBI" id="CHEBI:59776"/>
    </ligand>
</feature>
<feature type="binding site" evidence="1">
    <location>
        <position position="233"/>
    </location>
    <ligand>
        <name>D-glyceraldehyde 3-phosphate</name>
        <dbReference type="ChEBI" id="CHEBI:59776"/>
    </ligand>
</feature>
<feature type="binding site" evidence="1">
    <location>
        <position position="316"/>
    </location>
    <ligand>
        <name>NAD(+)</name>
        <dbReference type="ChEBI" id="CHEBI:57540"/>
    </ligand>
</feature>
<feature type="site" description="Activates thiol group during catalysis" evidence="1">
    <location>
        <position position="178"/>
    </location>
</feature>
<accession>Q27652</accession>
<sequence length="336" mass="36391">MKPQVGINGFGRIGRLVLRAAVASNSVNVVAVNDPFIDLEYMVYMFKYDSAHGRYKGDVKVDGGKLVIDSHRITVFQEMSASAVPWSQAGAEYIVESTGINTTVEKASAHFQGGAKKVIISAPSADSSHVRVGVNHEKYDPSMKVVSNASCTTNCLAPLAKVINDNFGIVEGLMTTVHSYTATQKVVDGPSKKAWRDGRTAAQNIVPASTGAAKRVGKVIPELNGKLTGMAFRVPTPNVSVVDLTCKLSKPATYDQIKAAVKRASESSALKRILEYTEDQVVSTDFLSTTCSSTFDARAGIALNDTFVKLIAWYDNEFGYSCRVVDLISYMFKRDH</sequence>
<keyword id="KW-0963">Cytoplasm</keyword>
<keyword id="KW-0324">Glycolysis</keyword>
<keyword id="KW-0520">NAD</keyword>
<keyword id="KW-0560">Oxidoreductase</keyword>
<comment type="catalytic activity">
    <reaction evidence="2">
        <text>D-glyceraldehyde 3-phosphate + phosphate + NAD(+) = (2R)-3-phospho-glyceroyl phosphate + NADH + H(+)</text>
        <dbReference type="Rhea" id="RHEA:10300"/>
        <dbReference type="ChEBI" id="CHEBI:15378"/>
        <dbReference type="ChEBI" id="CHEBI:43474"/>
        <dbReference type="ChEBI" id="CHEBI:57540"/>
        <dbReference type="ChEBI" id="CHEBI:57604"/>
        <dbReference type="ChEBI" id="CHEBI:57945"/>
        <dbReference type="ChEBI" id="CHEBI:59776"/>
        <dbReference type="EC" id="1.2.1.12"/>
    </reaction>
</comment>
<comment type="pathway">
    <text>Carbohydrate degradation; glycolysis; pyruvate from D-glyceraldehyde 3-phosphate: step 1/5.</text>
</comment>
<comment type="subunit">
    <text evidence="1">Homotetramer.</text>
</comment>
<comment type="subcellular location">
    <subcellularLocation>
        <location evidence="1">Cytoplasm</location>
    </subcellularLocation>
</comment>
<comment type="similarity">
    <text evidence="3">Belongs to the glyceraldehyde-3-phosphate dehydrogenase family.</text>
</comment>
<proteinExistence type="evidence at transcript level"/>
<evidence type="ECO:0000250" key="1"/>
<evidence type="ECO:0000255" key="2">
    <source>
        <dbReference type="PROSITE-ProRule" id="PRU10009"/>
    </source>
</evidence>
<evidence type="ECO:0000305" key="3"/>
<reference key="1">
    <citation type="submission" date="1994-12" db="EMBL/GenBank/DDBJ databases">
        <title>Echinococcus multilocularis: molecular cloning and characterization of the glyceraldehyde-3-phosphate dehydrogenase (GAPDH).</title>
        <authorList>
            <person name="Mueller V."/>
            <person name="Schnitzler P."/>
            <person name="Merckelbach A."/>
            <person name="Lucius R."/>
        </authorList>
    </citation>
    <scope>NUCLEOTIDE SEQUENCE [MRNA]</scope>
</reference>
<name>G3P_ECHMU</name>
<protein>
    <recommendedName>
        <fullName>Glyceraldehyde-3-phosphate dehydrogenase</fullName>
        <shortName>GAPDH</shortName>
        <ecNumber>1.2.1.12</ecNumber>
    </recommendedName>
</protein>
<dbReference type="EC" id="1.2.1.12"/>
<dbReference type="EMBL" id="U19101">
    <property type="protein sequence ID" value="AAA61574.1"/>
    <property type="molecule type" value="mRNA"/>
</dbReference>
<dbReference type="SMR" id="Q27652"/>
<dbReference type="eggNOG" id="KOG0657">
    <property type="taxonomic scope" value="Eukaryota"/>
</dbReference>
<dbReference type="UniPathway" id="UPA00109">
    <property type="reaction ID" value="UER00184"/>
</dbReference>
<dbReference type="GO" id="GO:0005829">
    <property type="term" value="C:cytosol"/>
    <property type="evidence" value="ECO:0007669"/>
    <property type="project" value="TreeGrafter"/>
</dbReference>
<dbReference type="GO" id="GO:0004365">
    <property type="term" value="F:glyceraldehyde-3-phosphate dehydrogenase (NAD+) (phosphorylating) activity"/>
    <property type="evidence" value="ECO:0007669"/>
    <property type="project" value="UniProtKB-EC"/>
</dbReference>
<dbReference type="GO" id="GO:0051287">
    <property type="term" value="F:NAD binding"/>
    <property type="evidence" value="ECO:0007669"/>
    <property type="project" value="InterPro"/>
</dbReference>
<dbReference type="GO" id="GO:0050661">
    <property type="term" value="F:NADP binding"/>
    <property type="evidence" value="ECO:0007669"/>
    <property type="project" value="InterPro"/>
</dbReference>
<dbReference type="GO" id="GO:0006006">
    <property type="term" value="P:glucose metabolic process"/>
    <property type="evidence" value="ECO:0007669"/>
    <property type="project" value="InterPro"/>
</dbReference>
<dbReference type="GO" id="GO:0006096">
    <property type="term" value="P:glycolytic process"/>
    <property type="evidence" value="ECO:0007669"/>
    <property type="project" value="UniProtKB-UniPathway"/>
</dbReference>
<dbReference type="CDD" id="cd18126">
    <property type="entry name" value="GAPDH_I_C"/>
    <property type="match status" value="1"/>
</dbReference>
<dbReference type="CDD" id="cd05214">
    <property type="entry name" value="GAPDH_I_N"/>
    <property type="match status" value="1"/>
</dbReference>
<dbReference type="FunFam" id="3.30.360.10:FF:000001">
    <property type="entry name" value="Glyceraldehyde-3-phosphate dehydrogenase"/>
    <property type="match status" value="1"/>
</dbReference>
<dbReference type="FunFam" id="3.40.50.720:FF:000266">
    <property type="entry name" value="Glyceraldehyde-3-phosphate dehydrogenase"/>
    <property type="match status" value="1"/>
</dbReference>
<dbReference type="Gene3D" id="3.30.360.10">
    <property type="entry name" value="Dihydrodipicolinate Reductase, domain 2"/>
    <property type="match status" value="1"/>
</dbReference>
<dbReference type="Gene3D" id="3.40.50.720">
    <property type="entry name" value="NAD(P)-binding Rossmann-like Domain"/>
    <property type="match status" value="1"/>
</dbReference>
<dbReference type="InterPro" id="IPR020831">
    <property type="entry name" value="GlycerAld/Erythrose_P_DH"/>
</dbReference>
<dbReference type="InterPro" id="IPR020830">
    <property type="entry name" value="GlycerAld_3-P_DH_AS"/>
</dbReference>
<dbReference type="InterPro" id="IPR020829">
    <property type="entry name" value="GlycerAld_3-P_DH_cat"/>
</dbReference>
<dbReference type="InterPro" id="IPR020828">
    <property type="entry name" value="GlycerAld_3-P_DH_NAD(P)-bd"/>
</dbReference>
<dbReference type="InterPro" id="IPR006424">
    <property type="entry name" value="Glyceraldehyde-3-P_DH_1"/>
</dbReference>
<dbReference type="InterPro" id="IPR036291">
    <property type="entry name" value="NAD(P)-bd_dom_sf"/>
</dbReference>
<dbReference type="NCBIfam" id="TIGR01534">
    <property type="entry name" value="GAPDH-I"/>
    <property type="match status" value="1"/>
</dbReference>
<dbReference type="PANTHER" id="PTHR10836">
    <property type="entry name" value="GLYCERALDEHYDE 3-PHOSPHATE DEHYDROGENASE"/>
    <property type="match status" value="1"/>
</dbReference>
<dbReference type="PANTHER" id="PTHR10836:SF76">
    <property type="entry name" value="GLYCERALDEHYDE-3-PHOSPHATE DEHYDROGENASE-RELATED"/>
    <property type="match status" value="1"/>
</dbReference>
<dbReference type="Pfam" id="PF02800">
    <property type="entry name" value="Gp_dh_C"/>
    <property type="match status" value="1"/>
</dbReference>
<dbReference type="Pfam" id="PF00044">
    <property type="entry name" value="Gp_dh_N"/>
    <property type="match status" value="1"/>
</dbReference>
<dbReference type="PIRSF" id="PIRSF000149">
    <property type="entry name" value="GAP_DH"/>
    <property type="match status" value="1"/>
</dbReference>
<dbReference type="PRINTS" id="PR00078">
    <property type="entry name" value="G3PDHDRGNASE"/>
</dbReference>
<dbReference type="SMART" id="SM00846">
    <property type="entry name" value="Gp_dh_N"/>
    <property type="match status" value="1"/>
</dbReference>
<dbReference type="SUPFAM" id="SSF55347">
    <property type="entry name" value="Glyceraldehyde-3-phosphate dehydrogenase-like, C-terminal domain"/>
    <property type="match status" value="1"/>
</dbReference>
<dbReference type="SUPFAM" id="SSF51735">
    <property type="entry name" value="NAD(P)-binding Rossmann-fold domains"/>
    <property type="match status" value="1"/>
</dbReference>
<dbReference type="PROSITE" id="PS00071">
    <property type="entry name" value="GAPDH"/>
    <property type="match status" value="1"/>
</dbReference>
<organism>
    <name type="scientific">Echinococcus multilocularis</name>
    <name type="common">Fox tapeworm</name>
    <dbReference type="NCBI Taxonomy" id="6211"/>
    <lineage>
        <taxon>Eukaryota</taxon>
        <taxon>Metazoa</taxon>
        <taxon>Spiralia</taxon>
        <taxon>Lophotrochozoa</taxon>
        <taxon>Platyhelminthes</taxon>
        <taxon>Cestoda</taxon>
        <taxon>Eucestoda</taxon>
        <taxon>Cyclophyllidea</taxon>
        <taxon>Taeniidae</taxon>
        <taxon>Echinococcus</taxon>
    </lineage>
</organism>